<proteinExistence type="evidence at transcript level"/>
<organism>
    <name type="scientific">Pongo abelii</name>
    <name type="common">Sumatran orangutan</name>
    <name type="synonym">Pongo pygmaeus abelii</name>
    <dbReference type="NCBI Taxonomy" id="9601"/>
    <lineage>
        <taxon>Eukaryota</taxon>
        <taxon>Metazoa</taxon>
        <taxon>Chordata</taxon>
        <taxon>Craniata</taxon>
        <taxon>Vertebrata</taxon>
        <taxon>Euteleostomi</taxon>
        <taxon>Mammalia</taxon>
        <taxon>Eutheria</taxon>
        <taxon>Euarchontoglires</taxon>
        <taxon>Primates</taxon>
        <taxon>Haplorrhini</taxon>
        <taxon>Catarrhini</taxon>
        <taxon>Hominidae</taxon>
        <taxon>Pongo</taxon>
    </lineage>
</organism>
<gene>
    <name type="primary">PSMD12</name>
</gene>
<evidence type="ECO:0000250" key="1">
    <source>
        <dbReference type="UniProtKB" id="O00232"/>
    </source>
</evidence>
<evidence type="ECO:0000255" key="2">
    <source>
        <dbReference type="PROSITE-ProRule" id="PRU01185"/>
    </source>
</evidence>
<evidence type="ECO:0000305" key="3"/>
<reference key="1">
    <citation type="submission" date="2004-11" db="EMBL/GenBank/DDBJ databases">
        <authorList>
            <consortium name="The German cDNA consortium"/>
        </authorList>
    </citation>
    <scope>NUCLEOTIDE SEQUENCE [LARGE SCALE MRNA]</scope>
    <source>
        <tissue>Brain cortex</tissue>
    </source>
</reference>
<keyword id="KW-0007">Acetylation</keyword>
<keyword id="KW-1017">Isopeptide bond</keyword>
<keyword id="KW-0647">Proteasome</keyword>
<keyword id="KW-1185">Reference proteome</keyword>
<keyword id="KW-0832">Ubl conjugation</keyword>
<comment type="function">
    <text evidence="1">Component of the 26S proteasome, a multiprotein complex involved in the ATP-dependent degradation of ubiquitinated proteins. This complex plays a key role in the maintenance of protein homeostasis by removing misfolded or damaged proteins, which could impair cellular functions, and by removing proteins whose functions are no longer required. Therefore, the proteasome participates in numerous cellular processes, including cell cycle progression, apoptosis, or DNA damage repair.</text>
</comment>
<comment type="subunit">
    <text evidence="1">Component of the 19S proteasome regulatory particle complex (By similarity). The 26S proteasome consists of a 20S core particle (CP) and two 19S regulatory subunits (RP) (By similarity). The regulatory particle is made of a lid composed of 9 subunits including PSMD12, a base containing 6 ATPases and few additional components (By similarity). Interacts with ERCC6 (By similarity).</text>
</comment>
<comment type="similarity">
    <text evidence="3">Belongs to the proteasome subunit p55 family.</text>
</comment>
<name>PSD12_PONAB</name>
<sequence>MADGGSERADGRIVKMEVDYSPTVDQRLPECAKLAKEGRLQEVIETLLSLEKQTRTASDMVSTSRILVAVVKMCYEAKEWDLLNENIMLLSKRRSQLKQAVAKMVQQCCTYVEEITDLPIKLRLIDTLRMVTEGKIYVEIERARLTKTLATIKEQNGDVKEAASILQELQVETYGSMEKKERVEFILEQMRLCLAVKDYIRTQIISKKINTKFFQEENTEKLKLKYYNLMIQLDQHEGSYLSICKHYRAIYDTPCIQAESEKWQQALKSVVLYVILAPFDNEQSDLVHRISGDKKLEEIPKYKDLLKLFTTMELMRWSTLVEDYGMELRKGSLESPATDVFGSTEEGEKRWKDLKNRVVEHNIRIMAKYYTRITMKRMAQLLDLSVDESEAFLSNLVVNKTIFAKVDRLAGIINFQRPKDPNNLLNDWSQKLNSLMSLVNKTTHLIAKEEMIHNLQ</sequence>
<accession>Q5RBI3</accession>
<dbReference type="EMBL" id="CR858665">
    <property type="protein sequence ID" value="CAH90877.1"/>
    <property type="molecule type" value="mRNA"/>
</dbReference>
<dbReference type="RefSeq" id="NP_001125501.1">
    <property type="nucleotide sequence ID" value="NM_001132029.1"/>
</dbReference>
<dbReference type="SMR" id="Q5RBI3"/>
<dbReference type="STRING" id="9601.ENSPPYP00000009620"/>
<dbReference type="GeneID" id="100172410"/>
<dbReference type="KEGG" id="pon:100172410"/>
<dbReference type="CTD" id="5718"/>
<dbReference type="eggNOG" id="KOG1498">
    <property type="taxonomic scope" value="Eukaryota"/>
</dbReference>
<dbReference type="InParanoid" id="Q5RBI3"/>
<dbReference type="OrthoDB" id="268763at2759"/>
<dbReference type="Proteomes" id="UP000001595">
    <property type="component" value="Unplaced"/>
</dbReference>
<dbReference type="GO" id="GO:0005737">
    <property type="term" value="C:cytoplasm"/>
    <property type="evidence" value="ECO:0007669"/>
    <property type="project" value="TreeGrafter"/>
</dbReference>
<dbReference type="GO" id="GO:0022624">
    <property type="term" value="C:proteasome accessory complex"/>
    <property type="evidence" value="ECO:0000250"/>
    <property type="project" value="UniProtKB"/>
</dbReference>
<dbReference type="GO" id="GO:0008541">
    <property type="term" value="C:proteasome regulatory particle, lid subcomplex"/>
    <property type="evidence" value="ECO:0007669"/>
    <property type="project" value="TreeGrafter"/>
</dbReference>
<dbReference type="FunFam" id="1.10.10.10:FF:000159">
    <property type="entry name" value="26S proteasome non-ATPase regulatory subunit 12"/>
    <property type="match status" value="1"/>
</dbReference>
<dbReference type="Gene3D" id="1.10.10.10">
    <property type="entry name" value="Winged helix-like DNA-binding domain superfamily/Winged helix DNA-binding domain"/>
    <property type="match status" value="1"/>
</dbReference>
<dbReference type="InterPro" id="IPR000717">
    <property type="entry name" value="PCI_dom"/>
</dbReference>
<dbReference type="InterPro" id="IPR054559">
    <property type="entry name" value="PSMD12-CSN4-like_N"/>
</dbReference>
<dbReference type="InterPro" id="IPR040134">
    <property type="entry name" value="PSMD12/CSN4"/>
</dbReference>
<dbReference type="InterPro" id="IPR040896">
    <property type="entry name" value="RPN5_C"/>
</dbReference>
<dbReference type="InterPro" id="IPR036388">
    <property type="entry name" value="WH-like_DNA-bd_sf"/>
</dbReference>
<dbReference type="InterPro" id="IPR036390">
    <property type="entry name" value="WH_DNA-bd_sf"/>
</dbReference>
<dbReference type="PANTHER" id="PTHR10855:SF1">
    <property type="entry name" value="26S PROTEASOME NON-ATPASE REGULATORY SUBUNIT 12"/>
    <property type="match status" value="1"/>
</dbReference>
<dbReference type="PANTHER" id="PTHR10855">
    <property type="entry name" value="26S PROTEASOME NON-ATPASE REGULATORY SUBUNIT 12/COP9 SIGNALOSOME COMPLEX SUBUNIT 4"/>
    <property type="match status" value="1"/>
</dbReference>
<dbReference type="Pfam" id="PF01399">
    <property type="entry name" value="PCI"/>
    <property type="match status" value="1"/>
</dbReference>
<dbReference type="Pfam" id="PF22241">
    <property type="entry name" value="PSMD12-CSN4_N"/>
    <property type="match status" value="1"/>
</dbReference>
<dbReference type="Pfam" id="PF18098">
    <property type="entry name" value="RPN5_C"/>
    <property type="match status" value="1"/>
</dbReference>
<dbReference type="SMART" id="SM00088">
    <property type="entry name" value="PINT"/>
    <property type="match status" value="1"/>
</dbReference>
<dbReference type="SUPFAM" id="SSF46785">
    <property type="entry name" value="Winged helix' DNA-binding domain"/>
    <property type="match status" value="1"/>
</dbReference>
<dbReference type="PROSITE" id="PS50250">
    <property type="entry name" value="PCI"/>
    <property type="match status" value="1"/>
</dbReference>
<feature type="initiator methionine" description="Removed" evidence="1">
    <location>
        <position position="1"/>
    </location>
</feature>
<feature type="chain" id="PRO_0000173863" description="26S proteasome non-ATPase regulatory subunit 12">
    <location>
        <begin position="2"/>
        <end position="456"/>
    </location>
</feature>
<feature type="domain" description="PCI" evidence="2">
    <location>
        <begin position="242"/>
        <end position="420"/>
    </location>
</feature>
<feature type="modified residue" description="N-acetylalanine" evidence="1">
    <location>
        <position position="2"/>
    </location>
</feature>
<feature type="modified residue" description="N6-acetyllysine" evidence="1">
    <location>
        <position position="221"/>
    </location>
</feature>
<feature type="modified residue" description="N6-acetyllysine" evidence="1">
    <location>
        <position position="368"/>
    </location>
</feature>
<feature type="cross-link" description="Glycyl lysine isopeptide (Lys-Gly) (interchain with G-Cter in SUMO1); alternate" evidence="1">
    <location>
        <position position="92"/>
    </location>
</feature>
<feature type="cross-link" description="Glycyl lysine isopeptide (Lys-Gly) (interchain with G-Cter in SUMO2); alternate" evidence="1">
    <location>
        <position position="92"/>
    </location>
</feature>
<protein>
    <recommendedName>
        <fullName>26S proteasome non-ATPase regulatory subunit 12</fullName>
    </recommendedName>
    <alternativeName>
        <fullName>26S proteasome regulatory subunit RPN5</fullName>
    </alternativeName>
    <alternativeName>
        <fullName>26S proteasome regulatory subunit p55</fullName>
    </alternativeName>
</protein>